<proteinExistence type="inferred from homology"/>
<evidence type="ECO:0000255" key="1">
    <source>
        <dbReference type="HAMAP-Rule" id="MF_04006"/>
    </source>
</evidence>
<evidence type="ECO:0000305" key="2"/>
<comment type="function">
    <text evidence="1">Plays a major role in the induction and maintenance of cellular transformation. E6 associates with host UBE3A/E6-AP ubiquitin-protein ligase and modulates its activity. Protects host keratinocytes from apoptosis by mediating the degradation of host BAK1. May also inhibit host immune response.</text>
</comment>
<comment type="subunit">
    <text evidence="1">Forms homodimers. Interacts with ubiquitin-protein ligase UBE3A/E6-AP; this interaction stimulates UBE3A ubiquitin activity. Interacts with host BAK1.</text>
</comment>
<comment type="subcellular location">
    <subcellularLocation>
        <location evidence="1">Host cytoplasm</location>
    </subcellularLocation>
    <subcellularLocation>
        <location evidence="1">Host nucleus</location>
    </subcellularLocation>
</comment>
<comment type="similarity">
    <text evidence="1 2">Belongs to the papillomaviridae E6 protein family.</text>
</comment>
<protein>
    <recommendedName>
        <fullName evidence="1">Protein E6</fullName>
    </recommendedName>
</protein>
<feature type="chain" id="PRO_0000133376" description="Protein E6">
    <location>
        <begin position="1"/>
        <end position="142"/>
    </location>
</feature>
<feature type="zinc finger region" evidence="1">
    <location>
        <begin position="30"/>
        <end position="66"/>
    </location>
</feature>
<feature type="zinc finger region" evidence="1">
    <location>
        <begin position="103"/>
        <end position="139"/>
    </location>
</feature>
<reference key="1">
    <citation type="submission" date="1995-10" db="EMBL/GenBank/DDBJ databases">
        <authorList>
            <person name="Delius H."/>
        </authorList>
    </citation>
    <scope>NUCLEOTIDE SEQUENCE [GENOMIC DNA]</scope>
</reference>
<organismHost>
    <name type="scientific">Homo sapiens</name>
    <name type="common">Human</name>
    <dbReference type="NCBI Taxonomy" id="9606"/>
</organismHost>
<keyword id="KW-0010">Activator</keyword>
<keyword id="KW-0238">DNA-binding</keyword>
<keyword id="KW-0244">Early protein</keyword>
<keyword id="KW-1035">Host cytoplasm</keyword>
<keyword id="KW-1048">Host nucleus</keyword>
<keyword id="KW-0945">Host-virus interaction</keyword>
<keyword id="KW-1090">Inhibition of host innate immune response by virus</keyword>
<keyword id="KW-0479">Metal-binding</keyword>
<keyword id="KW-1119">Modulation of host cell apoptosis by virus</keyword>
<keyword id="KW-1185">Reference proteome</keyword>
<keyword id="KW-0804">Transcription</keyword>
<keyword id="KW-0805">Transcription regulation</keyword>
<keyword id="KW-0899">Viral immunoevasion</keyword>
<keyword id="KW-0862">Zinc</keyword>
<keyword id="KW-0863">Zinc-finger</keyword>
<gene>
    <name evidence="1" type="primary">E6</name>
</gene>
<accession>Q80941</accession>
<organism>
    <name type="scientific">Human papillomavirus type 60</name>
    <dbReference type="NCBI Taxonomy" id="40540"/>
    <lineage>
        <taxon>Viruses</taxon>
        <taxon>Monodnaviria</taxon>
        <taxon>Shotokuvirae</taxon>
        <taxon>Cossaviricota</taxon>
        <taxon>Papovaviricetes</taxon>
        <taxon>Zurhausenvirales</taxon>
        <taxon>Papillomaviridae</taxon>
        <taxon>Firstpapillomavirinae</taxon>
        <taxon>Gammapapillomavirus</taxon>
        <taxon>Gammapapillomavirus 4</taxon>
    </lineage>
</organism>
<name>VE6_HPV60</name>
<dbReference type="EMBL" id="U31792">
    <property type="protein sequence ID" value="AAA79485.1"/>
    <property type="molecule type" value="Genomic_DNA"/>
</dbReference>
<dbReference type="RefSeq" id="NP_043437.1">
    <property type="nucleotide sequence ID" value="NC_001693.1"/>
</dbReference>
<dbReference type="SMR" id="Q80941"/>
<dbReference type="GeneID" id="1403638"/>
<dbReference type="KEGG" id="vg:1403638"/>
<dbReference type="OrthoDB" id="27353at10239"/>
<dbReference type="Proteomes" id="UP000120507">
    <property type="component" value="Genome"/>
</dbReference>
<dbReference type="GO" id="GO:0030430">
    <property type="term" value="C:host cell cytoplasm"/>
    <property type="evidence" value="ECO:0007669"/>
    <property type="project" value="UniProtKB-SubCell"/>
</dbReference>
<dbReference type="GO" id="GO:0042025">
    <property type="term" value="C:host cell nucleus"/>
    <property type="evidence" value="ECO:0007669"/>
    <property type="project" value="UniProtKB-SubCell"/>
</dbReference>
<dbReference type="GO" id="GO:0003677">
    <property type="term" value="F:DNA binding"/>
    <property type="evidence" value="ECO:0007669"/>
    <property type="project" value="UniProtKB-UniRule"/>
</dbReference>
<dbReference type="GO" id="GO:0008270">
    <property type="term" value="F:zinc ion binding"/>
    <property type="evidence" value="ECO:0007669"/>
    <property type="project" value="UniProtKB-KW"/>
</dbReference>
<dbReference type="GO" id="GO:0006351">
    <property type="term" value="P:DNA-templated transcription"/>
    <property type="evidence" value="ECO:0007669"/>
    <property type="project" value="UniProtKB-UniRule"/>
</dbReference>
<dbReference type="GO" id="GO:0006355">
    <property type="term" value="P:regulation of DNA-templated transcription"/>
    <property type="evidence" value="ECO:0007669"/>
    <property type="project" value="UniProtKB-UniRule"/>
</dbReference>
<dbReference type="GO" id="GO:0052150">
    <property type="term" value="P:symbiont-mediated perturbation of host apoptosis"/>
    <property type="evidence" value="ECO:0007669"/>
    <property type="project" value="UniProtKB-KW"/>
</dbReference>
<dbReference type="GO" id="GO:0039648">
    <property type="term" value="P:symbiont-mediated perturbation of host ubiquitin-like protein modification"/>
    <property type="evidence" value="ECO:0007669"/>
    <property type="project" value="UniProtKB-UniRule"/>
</dbReference>
<dbReference type="GO" id="GO:0052170">
    <property type="term" value="P:symbiont-mediated suppression of host innate immune response"/>
    <property type="evidence" value="ECO:0007669"/>
    <property type="project" value="UniProtKB-KW"/>
</dbReference>
<dbReference type="GO" id="GO:0039502">
    <property type="term" value="P:symbiont-mediated suppression of host type I interferon-mediated signaling pathway"/>
    <property type="evidence" value="ECO:0007669"/>
    <property type="project" value="UniProtKB-UniRule"/>
</dbReference>
<dbReference type="Gene3D" id="3.30.240.40">
    <property type="entry name" value="E6 early regulatory protein"/>
    <property type="match status" value="2"/>
</dbReference>
<dbReference type="HAMAP" id="MF_04006">
    <property type="entry name" value="HPV_E6"/>
    <property type="match status" value="1"/>
</dbReference>
<dbReference type="InterPro" id="IPR001334">
    <property type="entry name" value="E6"/>
</dbReference>
<dbReference type="InterPro" id="IPR038575">
    <property type="entry name" value="E6_sf"/>
</dbReference>
<dbReference type="Pfam" id="PF00518">
    <property type="entry name" value="E6"/>
    <property type="match status" value="1"/>
</dbReference>
<dbReference type="SUPFAM" id="SSF161229">
    <property type="entry name" value="E6 C-terminal domain-like"/>
    <property type="match status" value="2"/>
</dbReference>
<sequence length="142" mass="16810">MQMEEDRFPTTVADYCSEFDIPLKDLKLKCVFCRFYLTEQQLAAFYIKNLKLVWKNRYCFACCTPCLRLTAKFEAENYFQCMCKGEVLEVLTRIPLSSLSVRCFDCLTLLSFAEKIDCIISGQNFYLVRGRWRSYCRNCIEK</sequence>